<name>PAND_CHRVO</name>
<reference key="1">
    <citation type="journal article" date="2003" name="Proc. Natl. Acad. Sci. U.S.A.">
        <title>The complete genome sequence of Chromobacterium violaceum reveals remarkable and exploitable bacterial adaptability.</title>
        <authorList>
            <person name="Vasconcelos A.T.R."/>
            <person name="de Almeida D.F."/>
            <person name="Hungria M."/>
            <person name="Guimaraes C.T."/>
            <person name="Antonio R.V."/>
            <person name="Almeida F.C."/>
            <person name="de Almeida L.G.P."/>
            <person name="de Almeida R."/>
            <person name="Alves-Gomes J.A."/>
            <person name="Andrade E.M."/>
            <person name="Araripe J."/>
            <person name="de Araujo M.F.F."/>
            <person name="Astolfi-Filho S."/>
            <person name="Azevedo V."/>
            <person name="Baptista A.J."/>
            <person name="Bataus L.A.M."/>
            <person name="Batista J.S."/>
            <person name="Belo A."/>
            <person name="van den Berg C."/>
            <person name="Bogo M."/>
            <person name="Bonatto S."/>
            <person name="Bordignon J."/>
            <person name="Brigido M.M."/>
            <person name="Brito C.A."/>
            <person name="Brocchi M."/>
            <person name="Burity H.A."/>
            <person name="Camargo A.A."/>
            <person name="Cardoso D.D.P."/>
            <person name="Carneiro N.P."/>
            <person name="Carraro D.M."/>
            <person name="Carvalho C.M.B."/>
            <person name="Cascardo J.C.M."/>
            <person name="Cavada B.S."/>
            <person name="Chueire L.M.O."/>
            <person name="Creczynski-Pasa T.B."/>
            <person name="Cunha-Junior N.C."/>
            <person name="Fagundes N."/>
            <person name="Falcao C.L."/>
            <person name="Fantinatti F."/>
            <person name="Farias I.P."/>
            <person name="Felipe M.S.S."/>
            <person name="Ferrari L.P."/>
            <person name="Ferro J.A."/>
            <person name="Ferro M.I.T."/>
            <person name="Franco G.R."/>
            <person name="Freitas N.S.A."/>
            <person name="Furlan L.R."/>
            <person name="Gazzinelli R.T."/>
            <person name="Gomes E.A."/>
            <person name="Goncalves P.R."/>
            <person name="Grangeiro T.B."/>
            <person name="Grattapaglia D."/>
            <person name="Grisard E.C."/>
            <person name="Hanna E.S."/>
            <person name="Jardim S.N."/>
            <person name="Laurino J."/>
            <person name="Leoi L.C.T."/>
            <person name="Lima L.F.A."/>
            <person name="Loureiro M.F."/>
            <person name="Lyra M.C.C.P."/>
            <person name="Madeira H.M.F."/>
            <person name="Manfio G.P."/>
            <person name="Maranhao A.Q."/>
            <person name="Martins W.S."/>
            <person name="di Mauro S.M.Z."/>
            <person name="de Medeiros S.R.B."/>
            <person name="Meissner R.V."/>
            <person name="Moreira M.A.M."/>
            <person name="Nascimento F.F."/>
            <person name="Nicolas M.F."/>
            <person name="Oliveira J.G."/>
            <person name="Oliveira S.C."/>
            <person name="Paixao R.F.C."/>
            <person name="Parente J.A."/>
            <person name="Pedrosa F.O."/>
            <person name="Pena S.D.J."/>
            <person name="Pereira J.O."/>
            <person name="Pereira M."/>
            <person name="Pinto L.S.R.C."/>
            <person name="Pinto L.S."/>
            <person name="Porto J.I.R."/>
            <person name="Potrich D.P."/>
            <person name="Ramalho-Neto C.E."/>
            <person name="Reis A.M.M."/>
            <person name="Rigo L.U."/>
            <person name="Rondinelli E."/>
            <person name="Santos E.B.P."/>
            <person name="Santos F.R."/>
            <person name="Schneider M.P.C."/>
            <person name="Seuanez H.N."/>
            <person name="Silva A.M.R."/>
            <person name="da Silva A.L.C."/>
            <person name="Silva D.W."/>
            <person name="Silva R."/>
            <person name="Simoes I.C."/>
            <person name="Simon D."/>
            <person name="Soares C.M.A."/>
            <person name="Soares R.B.A."/>
            <person name="Souza E.M."/>
            <person name="Souza K.R.L."/>
            <person name="Souza R.C."/>
            <person name="Steffens M.B.R."/>
            <person name="Steindel M."/>
            <person name="Teixeira S.R."/>
            <person name="Urmenyi T."/>
            <person name="Vettore A."/>
            <person name="Wassem R."/>
            <person name="Zaha A."/>
            <person name="Simpson A.J.G."/>
        </authorList>
    </citation>
    <scope>NUCLEOTIDE SEQUENCE [LARGE SCALE GENOMIC DNA]</scope>
    <source>
        <strain>ATCC 12472 / DSM 30191 / JCM 1249 / CCUG 213 / NBRC 12614 / NCIMB 9131 / NCTC 9757 / MK</strain>
    </source>
</reference>
<feature type="chain" id="PRO_0000023061" description="Aspartate 1-decarboxylase beta chain" evidence="1">
    <location>
        <begin position="1"/>
        <end position="24"/>
    </location>
</feature>
<feature type="chain" id="PRO_0000023062" description="Aspartate 1-decarboxylase alpha chain" evidence="1">
    <location>
        <begin position="25"/>
        <end position="126"/>
    </location>
</feature>
<feature type="active site" description="Schiff-base intermediate with substrate; via pyruvic acid" evidence="1">
    <location>
        <position position="25"/>
    </location>
</feature>
<feature type="active site" description="Proton donor" evidence="1">
    <location>
        <position position="58"/>
    </location>
</feature>
<feature type="binding site" evidence="1">
    <location>
        <position position="57"/>
    </location>
    <ligand>
        <name>substrate</name>
    </ligand>
</feature>
<feature type="binding site" evidence="1">
    <location>
        <begin position="73"/>
        <end position="75"/>
    </location>
    <ligand>
        <name>substrate</name>
    </ligand>
</feature>
<feature type="modified residue" description="Pyruvic acid (Ser)" evidence="1">
    <location>
        <position position="25"/>
    </location>
</feature>
<organism>
    <name type="scientific">Chromobacterium violaceum (strain ATCC 12472 / DSM 30191 / JCM 1249 / CCUG 213 / NBRC 12614 / NCIMB 9131 / NCTC 9757 / MK)</name>
    <dbReference type="NCBI Taxonomy" id="243365"/>
    <lineage>
        <taxon>Bacteria</taxon>
        <taxon>Pseudomonadati</taxon>
        <taxon>Pseudomonadota</taxon>
        <taxon>Betaproteobacteria</taxon>
        <taxon>Neisseriales</taxon>
        <taxon>Chromobacteriaceae</taxon>
        <taxon>Chromobacterium</taxon>
    </lineage>
</organism>
<accession>Q7NXI9</accession>
<comment type="function">
    <text evidence="1">Catalyzes the pyruvoyl-dependent decarboxylation of aspartate to produce beta-alanine.</text>
</comment>
<comment type="catalytic activity">
    <reaction evidence="1">
        <text>L-aspartate + H(+) = beta-alanine + CO2</text>
        <dbReference type="Rhea" id="RHEA:19497"/>
        <dbReference type="ChEBI" id="CHEBI:15378"/>
        <dbReference type="ChEBI" id="CHEBI:16526"/>
        <dbReference type="ChEBI" id="CHEBI:29991"/>
        <dbReference type="ChEBI" id="CHEBI:57966"/>
        <dbReference type="EC" id="4.1.1.11"/>
    </reaction>
</comment>
<comment type="cofactor">
    <cofactor evidence="1">
        <name>pyruvate</name>
        <dbReference type="ChEBI" id="CHEBI:15361"/>
    </cofactor>
    <text evidence="1">Binds 1 pyruvoyl group covalently per subunit.</text>
</comment>
<comment type="pathway">
    <text evidence="1">Cofactor biosynthesis; (R)-pantothenate biosynthesis; beta-alanine from L-aspartate: step 1/1.</text>
</comment>
<comment type="subunit">
    <text evidence="1">Heterooctamer of four alpha and four beta subunits.</text>
</comment>
<comment type="subcellular location">
    <subcellularLocation>
        <location evidence="1">Cytoplasm</location>
    </subcellularLocation>
</comment>
<comment type="PTM">
    <text evidence="1">Is synthesized initially as an inactive proenzyme, which is activated by self-cleavage at a specific serine bond to produce a beta-subunit with a hydroxyl group at its C-terminus and an alpha-subunit with a pyruvoyl group at its N-terminus.</text>
</comment>
<comment type="similarity">
    <text evidence="1">Belongs to the PanD family.</text>
</comment>
<protein>
    <recommendedName>
        <fullName evidence="1">Aspartate 1-decarboxylase</fullName>
        <ecNumber evidence="1">4.1.1.11</ecNumber>
    </recommendedName>
    <alternativeName>
        <fullName evidence="1">Aspartate alpha-decarboxylase</fullName>
    </alternativeName>
    <component>
        <recommendedName>
            <fullName evidence="1">Aspartate 1-decarboxylase beta chain</fullName>
        </recommendedName>
    </component>
    <component>
        <recommendedName>
            <fullName evidence="1">Aspartate 1-decarboxylase alpha chain</fullName>
        </recommendedName>
    </component>
</protein>
<evidence type="ECO:0000255" key="1">
    <source>
        <dbReference type="HAMAP-Rule" id="MF_00446"/>
    </source>
</evidence>
<keyword id="KW-0068">Autocatalytic cleavage</keyword>
<keyword id="KW-0963">Cytoplasm</keyword>
<keyword id="KW-0210">Decarboxylase</keyword>
<keyword id="KW-0456">Lyase</keyword>
<keyword id="KW-0566">Pantothenate biosynthesis</keyword>
<keyword id="KW-0670">Pyruvate</keyword>
<keyword id="KW-1185">Reference proteome</keyword>
<keyword id="KW-0704">Schiff base</keyword>
<keyword id="KW-0865">Zymogen</keyword>
<sequence>MQRNMLKSKLHRVTTTHAELHYIGSCAIDENLLEAADILEYEEVQIWNVTNGERFATYAIKAERGSGVISVNGSAARRAAPGDLLIIASFAQYEDAELKGHSPKLVFVDGDNRLTEVKGATPTQPA</sequence>
<proteinExistence type="inferred from homology"/>
<dbReference type="EC" id="4.1.1.11" evidence="1"/>
<dbReference type="EMBL" id="AE016825">
    <property type="protein sequence ID" value="AAQ59313.1"/>
    <property type="molecule type" value="Genomic_DNA"/>
</dbReference>
<dbReference type="RefSeq" id="WP_011135189.1">
    <property type="nucleotide sequence ID" value="NC_005085.1"/>
</dbReference>
<dbReference type="SMR" id="Q7NXI9"/>
<dbReference type="STRING" id="243365.CV_1637"/>
<dbReference type="GeneID" id="66367323"/>
<dbReference type="KEGG" id="cvi:CV_1637"/>
<dbReference type="eggNOG" id="COG0853">
    <property type="taxonomic scope" value="Bacteria"/>
</dbReference>
<dbReference type="HOGENOM" id="CLU_115305_2_1_4"/>
<dbReference type="OrthoDB" id="9803983at2"/>
<dbReference type="UniPathway" id="UPA00028">
    <property type="reaction ID" value="UER00002"/>
</dbReference>
<dbReference type="Proteomes" id="UP000001424">
    <property type="component" value="Chromosome"/>
</dbReference>
<dbReference type="GO" id="GO:0005829">
    <property type="term" value="C:cytosol"/>
    <property type="evidence" value="ECO:0007669"/>
    <property type="project" value="TreeGrafter"/>
</dbReference>
<dbReference type="GO" id="GO:0004068">
    <property type="term" value="F:aspartate 1-decarboxylase activity"/>
    <property type="evidence" value="ECO:0007669"/>
    <property type="project" value="UniProtKB-UniRule"/>
</dbReference>
<dbReference type="GO" id="GO:0006523">
    <property type="term" value="P:alanine biosynthetic process"/>
    <property type="evidence" value="ECO:0007669"/>
    <property type="project" value="InterPro"/>
</dbReference>
<dbReference type="GO" id="GO:0015940">
    <property type="term" value="P:pantothenate biosynthetic process"/>
    <property type="evidence" value="ECO:0007669"/>
    <property type="project" value="UniProtKB-UniRule"/>
</dbReference>
<dbReference type="CDD" id="cd06919">
    <property type="entry name" value="Asp_decarbox"/>
    <property type="match status" value="1"/>
</dbReference>
<dbReference type="Gene3D" id="2.40.40.20">
    <property type="match status" value="1"/>
</dbReference>
<dbReference type="HAMAP" id="MF_00446">
    <property type="entry name" value="PanD"/>
    <property type="match status" value="1"/>
</dbReference>
<dbReference type="InterPro" id="IPR009010">
    <property type="entry name" value="Asp_de-COase-like_dom_sf"/>
</dbReference>
<dbReference type="InterPro" id="IPR003190">
    <property type="entry name" value="Asp_decarbox"/>
</dbReference>
<dbReference type="NCBIfam" id="TIGR00223">
    <property type="entry name" value="panD"/>
    <property type="match status" value="1"/>
</dbReference>
<dbReference type="PANTHER" id="PTHR21012">
    <property type="entry name" value="ASPARTATE 1-DECARBOXYLASE"/>
    <property type="match status" value="1"/>
</dbReference>
<dbReference type="PANTHER" id="PTHR21012:SF0">
    <property type="entry name" value="ASPARTATE 1-DECARBOXYLASE"/>
    <property type="match status" value="1"/>
</dbReference>
<dbReference type="Pfam" id="PF02261">
    <property type="entry name" value="Asp_decarbox"/>
    <property type="match status" value="1"/>
</dbReference>
<dbReference type="PIRSF" id="PIRSF006246">
    <property type="entry name" value="Asp_decarbox"/>
    <property type="match status" value="1"/>
</dbReference>
<dbReference type="SUPFAM" id="SSF50692">
    <property type="entry name" value="ADC-like"/>
    <property type="match status" value="1"/>
</dbReference>
<gene>
    <name evidence="1" type="primary">panD</name>
    <name type="ordered locus">CV_1637</name>
</gene>